<reference key="1">
    <citation type="journal article" date="2006" name="Science">
        <title>The genome of black cottonwood, Populus trichocarpa (Torr. &amp; Gray).</title>
        <authorList>
            <person name="Tuskan G.A."/>
            <person name="Difazio S."/>
            <person name="Jansson S."/>
            <person name="Bohlmann J."/>
            <person name="Grigoriev I."/>
            <person name="Hellsten U."/>
            <person name="Putnam N."/>
            <person name="Ralph S."/>
            <person name="Rombauts S."/>
            <person name="Salamov A."/>
            <person name="Schein J."/>
            <person name="Sterck L."/>
            <person name="Aerts A."/>
            <person name="Bhalerao R.R."/>
            <person name="Bhalerao R.P."/>
            <person name="Blaudez D."/>
            <person name="Boerjan W."/>
            <person name="Brun A."/>
            <person name="Brunner A."/>
            <person name="Busov V."/>
            <person name="Campbell M."/>
            <person name="Carlson J."/>
            <person name="Chalot M."/>
            <person name="Chapman J."/>
            <person name="Chen G.-L."/>
            <person name="Cooper D."/>
            <person name="Coutinho P.M."/>
            <person name="Couturier J."/>
            <person name="Covert S."/>
            <person name="Cronk Q."/>
            <person name="Cunningham R."/>
            <person name="Davis J."/>
            <person name="Degroeve S."/>
            <person name="Dejardin A."/>
            <person name="dePamphilis C.W."/>
            <person name="Detter J."/>
            <person name="Dirks B."/>
            <person name="Dubchak I."/>
            <person name="Duplessis S."/>
            <person name="Ehlting J."/>
            <person name="Ellis B."/>
            <person name="Gendler K."/>
            <person name="Goodstein D."/>
            <person name="Gribskov M."/>
            <person name="Grimwood J."/>
            <person name="Groover A."/>
            <person name="Gunter L."/>
            <person name="Hamberger B."/>
            <person name="Heinze B."/>
            <person name="Helariutta Y."/>
            <person name="Henrissat B."/>
            <person name="Holligan D."/>
            <person name="Holt R."/>
            <person name="Huang W."/>
            <person name="Islam-Faridi N."/>
            <person name="Jones S."/>
            <person name="Jones-Rhoades M."/>
            <person name="Jorgensen R."/>
            <person name="Joshi C."/>
            <person name="Kangasjaervi J."/>
            <person name="Karlsson J."/>
            <person name="Kelleher C."/>
            <person name="Kirkpatrick R."/>
            <person name="Kirst M."/>
            <person name="Kohler A."/>
            <person name="Kalluri U."/>
            <person name="Larimer F."/>
            <person name="Leebens-Mack J."/>
            <person name="Leple J.-C."/>
            <person name="Locascio P."/>
            <person name="Lou Y."/>
            <person name="Lucas S."/>
            <person name="Martin F."/>
            <person name="Montanini B."/>
            <person name="Napoli C."/>
            <person name="Nelson D.R."/>
            <person name="Nelson C."/>
            <person name="Nieminen K."/>
            <person name="Nilsson O."/>
            <person name="Pereda V."/>
            <person name="Peter G."/>
            <person name="Philippe R."/>
            <person name="Pilate G."/>
            <person name="Poliakov A."/>
            <person name="Razumovskaya J."/>
            <person name="Richardson P."/>
            <person name="Rinaldi C."/>
            <person name="Ritland K."/>
            <person name="Rouze P."/>
            <person name="Ryaboy D."/>
            <person name="Schmutz J."/>
            <person name="Schrader J."/>
            <person name="Segerman B."/>
            <person name="Shin H."/>
            <person name="Siddiqui A."/>
            <person name="Sterky F."/>
            <person name="Terry A."/>
            <person name="Tsai C.-J."/>
            <person name="Uberbacher E."/>
            <person name="Unneberg P."/>
            <person name="Vahala J."/>
            <person name="Wall K."/>
            <person name="Wessler S."/>
            <person name="Yang G."/>
            <person name="Yin T."/>
            <person name="Douglas C."/>
            <person name="Marra M."/>
            <person name="Sandberg G."/>
            <person name="Van de Peer Y."/>
            <person name="Rokhsar D.S."/>
        </authorList>
    </citation>
    <scope>NUCLEOTIDE SEQUENCE [LARGE SCALE GENOMIC DNA]</scope>
    <source>
        <strain>cv. Nisqually</strain>
    </source>
</reference>
<reference key="2">
    <citation type="journal article" date="2022" name="Mol. Biol. Evol.">
        <title>Duplication of NRAMP3 gene in poplars generated two homologous transporters with distinct functions.</title>
        <authorList>
            <person name="Pottier M."/>
            <person name="Le Thi V.A."/>
            <person name="Primard-Brisset C."/>
            <person name="Marion J."/>
            <person name="Bianchi M.W."/>
            <person name="Victor C."/>
            <person name="Dejardin A."/>
            <person name="Pilate G."/>
            <person name="Thomine S."/>
        </authorList>
    </citation>
    <scope>GENE FAMILY</scope>
    <source>
        <strain>cv. Nisqually</strain>
    </source>
</reference>
<evidence type="ECO:0000250" key="1">
    <source>
        <dbReference type="UniProtKB" id="Q9S814"/>
    </source>
</evidence>
<evidence type="ECO:0000255" key="2"/>
<evidence type="ECO:0000255" key="3">
    <source>
        <dbReference type="PROSITE-ProRule" id="PRU00498"/>
    </source>
</evidence>
<evidence type="ECO:0000256" key="4">
    <source>
        <dbReference type="SAM" id="MobiDB-lite"/>
    </source>
</evidence>
<evidence type="ECO:0000303" key="5">
    <source>
    </source>
</evidence>
<evidence type="ECO:0000305" key="6"/>
<sequence length="1291" mass="140405">METEFVNANHLPHFLRRALPALGPGLLIAIGYVDPGKWAATVEGGARFGFDLVLPMLIFNFVAILCQYLSARIGVVTGKDLAQICSDEYDKWTCMFLGVQAALSVIALDLTMILGIAHGLNLLFGMDLSTCVFLAAVDAVLFPVFATLLERCKASFLSTCIAGFLLLLYFFGVLISQPEIPLPMNGMPIKLSEDSAFALMSLLGASIMPHNFFLHSSMVLQHQGPPNISKGALCLNHFFAILCIFSGIYLVNYVLMNSAANVFYSTGLVLLTFPDAMSLMEPVFRSPVALCVFSLILFFANHITALTWNLGGQVVLQGFLRLDIPNWLQRATIRIIAVVPALYCVWTSGVEGIYQLLIFTQVMVALLLPSSVIPLFRIASSRQVMAAYKISAFLEFLALISFMGMLGIKIIFVVEMVFGDSDWAGNLRWSTSGGSSTSYTVLLITACSSFCLMLWLAATPLKSATHLDAQVWNWDVQNTVSEPSMQIEEEIFSETRYTEEESIGGQEQLSGPGKSAESYSDVTVANADPDLPVTIMESDQEHHLTTIKENHSEITFSSPGTFYEEETSPIIESVSLSAAMNVVPGSELLGAKKIDIESMDSVEKTVDIDGDFHAEKEDDEGDSWEPEESSKGVPGSTSSLTSDGPGSFRSLSGKSDEGGNGAGSLSRLAGLGRAARRQLASVLDEFWGQLYDFHGQTTQEAKTKKLDALGVDLKPSLLKVDTAGKEFSGYFSSVGGRASDSQIHSSLGDSPNHLRVPSNIDSSYGGQRGPSSLWSNHMQLMDAYAQGPSRSIADSSERRYSSVHTLPSSDGRCIQPATVHGYQIASIINQIAKERGSSSLNGQMDSPAPISPSLGPRNYRDPLTVAMGQKLQNGPSSSQPPGFQNLAVSRNSTLQSERHYHDVYSSGSADDAGKSANTKKYHSLPDIAGLAGPYRDLYMSEKNAQWDKSVGFGSSVSRTGYEQSYYSNTRSGAGAGGPLSFNRLPKGHGDAFSFHMTPDPGSLWSRQPFEQFGVADKSRVVGSGLGNRSNSINREVISPVDPEAQLLQSFRRCIVKLLKLEGSDWLFRQNDGADEDLIDRVAARERYLYEAETREMNCVANMGESPYLYSDRKSGSVLRNDDAAITNIMVSSVPNCGEGCVWRVDLIISFGVWCIHRILDLSLMESRPELWGKYTYVLNRLQGIIELAFSKPRSPMSPCFCLQIPASHQHRSSPPVSNGMLPPASKPGRGKCTTAATLLDLIKDVEIAISCRKGRSGTAAGDVAFPKGKENLASVLKRYKRRLSSKGIASK</sequence>
<gene>
    <name evidence="5" type="primary">EIN2.2</name>
    <name evidence="6" type="ordered locus">Potri.006G127100</name>
</gene>
<dbReference type="EMBL" id="CM009295">
    <property type="protein sequence ID" value="PNT31317.1"/>
    <property type="molecule type" value="Genomic_DNA"/>
</dbReference>
<dbReference type="SMR" id="A0A2K2A1B1"/>
<dbReference type="Proteomes" id="UP000006729">
    <property type="component" value="Chromosome 6"/>
</dbReference>
<dbReference type="ExpressionAtlas" id="A0A2K2A1B1">
    <property type="expression patterns" value="baseline and differential"/>
</dbReference>
<dbReference type="GO" id="GO:0005789">
    <property type="term" value="C:endoplasmic reticulum membrane"/>
    <property type="evidence" value="ECO:0007669"/>
    <property type="project" value="UniProtKB-SubCell"/>
</dbReference>
<dbReference type="GO" id="GO:0005634">
    <property type="term" value="C:nucleus"/>
    <property type="evidence" value="ECO:0007669"/>
    <property type="project" value="UniProtKB-SubCell"/>
</dbReference>
<dbReference type="GO" id="GO:0005886">
    <property type="term" value="C:plasma membrane"/>
    <property type="evidence" value="ECO:0000318"/>
    <property type="project" value="GO_Central"/>
</dbReference>
<dbReference type="GO" id="GO:0015086">
    <property type="term" value="F:cadmium ion transmembrane transporter activity"/>
    <property type="evidence" value="ECO:0000318"/>
    <property type="project" value="GO_Central"/>
</dbReference>
<dbReference type="GO" id="GO:0005384">
    <property type="term" value="F:manganese ion transmembrane transporter activity"/>
    <property type="evidence" value="ECO:0000318"/>
    <property type="project" value="GO_Central"/>
</dbReference>
<dbReference type="GO" id="GO:0009873">
    <property type="term" value="P:ethylene-activated signaling pathway"/>
    <property type="evidence" value="ECO:0007669"/>
    <property type="project" value="InterPro"/>
</dbReference>
<dbReference type="GO" id="GO:0034755">
    <property type="term" value="P:iron ion transmembrane transport"/>
    <property type="evidence" value="ECO:0000318"/>
    <property type="project" value="GO_Central"/>
</dbReference>
<dbReference type="GO" id="GO:0006828">
    <property type="term" value="P:manganese ion transport"/>
    <property type="evidence" value="ECO:0000318"/>
    <property type="project" value="GO_Central"/>
</dbReference>
<dbReference type="InterPro" id="IPR017187">
    <property type="entry name" value="EIN2"/>
</dbReference>
<dbReference type="InterPro" id="IPR001046">
    <property type="entry name" value="NRAMP_fam"/>
</dbReference>
<dbReference type="NCBIfam" id="NF037982">
    <property type="entry name" value="Nramp_1"/>
    <property type="match status" value="1"/>
</dbReference>
<dbReference type="PANTHER" id="PTHR11706:SF75">
    <property type="entry name" value="ETHYLENE-INSENSITIVE PROTEIN 2"/>
    <property type="match status" value="1"/>
</dbReference>
<dbReference type="PANTHER" id="PTHR11706">
    <property type="entry name" value="SOLUTE CARRIER PROTEIN FAMILY 11 MEMBER"/>
    <property type="match status" value="1"/>
</dbReference>
<dbReference type="Pfam" id="PF01566">
    <property type="entry name" value="Nramp"/>
    <property type="match status" value="1"/>
</dbReference>
<dbReference type="PIRSF" id="PIRSF037378">
    <property type="entry name" value="EIN2"/>
    <property type="match status" value="1"/>
</dbReference>
<dbReference type="PRINTS" id="PR00447">
    <property type="entry name" value="NATRESASSCMP"/>
</dbReference>
<keyword id="KW-0963">Cytoplasm</keyword>
<keyword id="KW-0256">Endoplasmic reticulum</keyword>
<keyword id="KW-0325">Glycoprotein</keyword>
<keyword id="KW-0472">Membrane</keyword>
<keyword id="KW-0539">Nucleus</keyword>
<keyword id="KW-0597">Phosphoprotein</keyword>
<keyword id="KW-1185">Reference proteome</keyword>
<keyword id="KW-0812">Transmembrane</keyword>
<keyword id="KW-1133">Transmembrane helix</keyword>
<accession>A0A2K2A1B1</accession>
<protein>
    <recommendedName>
        <fullName evidence="5">Ethylene-insensitive protein 2.2</fullName>
        <shortName evidence="5">PotriEIN2.2</shortName>
    </recommendedName>
    <component>
        <recommendedName>
            <fullName evidence="1">EIN2.2-CEND</fullName>
        </recommendedName>
    </component>
</protein>
<name>EIN22_POPTR</name>
<organism>
    <name type="scientific">Populus trichocarpa</name>
    <name type="common">Western balsam poplar</name>
    <name type="synonym">Populus balsamifera subsp. trichocarpa</name>
    <dbReference type="NCBI Taxonomy" id="3694"/>
    <lineage>
        <taxon>Eukaryota</taxon>
        <taxon>Viridiplantae</taxon>
        <taxon>Streptophyta</taxon>
        <taxon>Embryophyta</taxon>
        <taxon>Tracheophyta</taxon>
        <taxon>Spermatophyta</taxon>
        <taxon>Magnoliopsida</taxon>
        <taxon>eudicotyledons</taxon>
        <taxon>Gunneridae</taxon>
        <taxon>Pentapetalae</taxon>
        <taxon>rosids</taxon>
        <taxon>fabids</taxon>
        <taxon>Malpighiales</taxon>
        <taxon>Salicaceae</taxon>
        <taxon>Saliceae</taxon>
        <taxon>Populus</taxon>
    </lineage>
</organism>
<proteinExistence type="inferred from homology"/>
<feature type="chain" id="PRO_0000457946" description="Ethylene-insensitive protein 2.2">
    <location>
        <begin position="1"/>
        <end position="1291"/>
    </location>
</feature>
<feature type="chain" id="PRO_0000457947" description="EIN2.2-CEND">
    <location>
        <begin position="648"/>
        <end position="1291"/>
    </location>
</feature>
<feature type="transmembrane region" description="Helical" evidence="2">
    <location>
        <begin position="18"/>
        <end position="38"/>
    </location>
</feature>
<feature type="transmembrane region" description="Helical" evidence="2">
    <location>
        <begin position="48"/>
        <end position="68"/>
    </location>
</feature>
<feature type="transmembrane region" description="Helical" evidence="2">
    <location>
        <begin position="96"/>
        <end position="116"/>
    </location>
</feature>
<feature type="transmembrane region" description="Helical" evidence="2">
    <location>
        <begin position="128"/>
        <end position="148"/>
    </location>
</feature>
<feature type="transmembrane region" description="Helical" evidence="2">
    <location>
        <begin position="155"/>
        <end position="175"/>
    </location>
</feature>
<feature type="transmembrane region" description="Helical" evidence="2">
    <location>
        <begin position="195"/>
        <end position="215"/>
    </location>
</feature>
<feature type="transmembrane region" description="Helical" evidence="2">
    <location>
        <begin position="231"/>
        <end position="251"/>
    </location>
</feature>
<feature type="transmembrane region" description="Helical" evidence="2">
    <location>
        <begin position="253"/>
        <end position="273"/>
    </location>
</feature>
<feature type="transmembrane region" description="Helical" evidence="2">
    <location>
        <begin position="288"/>
        <end position="308"/>
    </location>
</feature>
<feature type="transmembrane region" description="Helical" evidence="2">
    <location>
        <begin position="335"/>
        <end position="355"/>
    </location>
</feature>
<feature type="transmembrane region" description="Helical" evidence="2">
    <location>
        <begin position="356"/>
        <end position="376"/>
    </location>
</feature>
<feature type="transmembrane region" description="Helical" evidence="2">
    <location>
        <begin position="393"/>
        <end position="413"/>
    </location>
</feature>
<feature type="transmembrane region" description="Helical" evidence="2">
    <location>
        <begin position="441"/>
        <end position="461"/>
    </location>
</feature>
<feature type="region of interest" description="Disordered" evidence="4">
    <location>
        <begin position="498"/>
        <end position="518"/>
    </location>
</feature>
<feature type="region of interest" description="Disordered" evidence="4">
    <location>
        <begin position="614"/>
        <end position="662"/>
    </location>
</feature>
<feature type="region of interest" description="Disordered" evidence="4">
    <location>
        <begin position="742"/>
        <end position="768"/>
    </location>
</feature>
<feature type="region of interest" description="Disordered" evidence="4">
    <location>
        <begin position="787"/>
        <end position="808"/>
    </location>
</feature>
<feature type="region of interest" description="Disordered" evidence="4">
    <location>
        <begin position="836"/>
        <end position="856"/>
    </location>
</feature>
<feature type="region of interest" description="Disordered" evidence="4">
    <location>
        <begin position="1210"/>
        <end position="1229"/>
    </location>
</feature>
<feature type="short sequence motif" description="Nuclear localization signal" evidence="2">
    <location>
        <begin position="1262"/>
        <end position="1269"/>
    </location>
</feature>
<feature type="compositionally biased region" description="Acidic residues" evidence="4">
    <location>
        <begin position="617"/>
        <end position="627"/>
    </location>
</feature>
<feature type="compositionally biased region" description="Polar residues" evidence="4">
    <location>
        <begin position="635"/>
        <end position="653"/>
    </location>
</feature>
<feature type="compositionally biased region" description="Polar residues" evidence="4">
    <location>
        <begin position="759"/>
        <end position="768"/>
    </location>
</feature>
<feature type="modified residue" description="Phosphoserine" evidence="1">
    <location>
        <position position="647"/>
    </location>
</feature>
<feature type="modified residue" description="Phosphoserine" evidence="1">
    <location>
        <position position="664"/>
    </location>
</feature>
<feature type="modified residue" description="Phosphothreonine" evidence="1">
    <location>
        <position position="818"/>
    </location>
</feature>
<feature type="modified residue" description="Phosphoserine" evidence="1">
    <location>
        <position position="923"/>
    </location>
</feature>
<feature type="glycosylation site" description="N-linked (GlcNAc...) asparagine" evidence="3">
    <location>
        <position position="227"/>
    </location>
</feature>
<feature type="glycosylation site" description="N-linked (GlcNAc...) asparagine" evidence="3">
    <location>
        <position position="550"/>
    </location>
</feature>
<feature type="glycosylation site" description="N-linked (GlcNAc...) asparagine" evidence="3">
    <location>
        <position position="891"/>
    </location>
</feature>
<feature type="glycosylation site" description="N-linked (GlcNAc...) asparagine" evidence="3">
    <location>
        <position position="1027"/>
    </location>
</feature>
<comment type="function">
    <text evidence="1">Central factor in signaling pathways regulated by ethylene (ET) and involved in various processes including development, plant defense, senescence, nucleotide sugar flux, and tropisms.</text>
</comment>
<comment type="function">
    <molecule>EIN2.2-CEND</molecule>
    <text evidence="1">Trafficking signal inducing ethylene response (By similarity). The nuclear localization is both necessary and sufficient to activate EIN3-mediated transcription and ethylene responses (By similarity).</text>
</comment>
<comment type="subcellular location">
    <molecule>Ethylene-insensitive protein 2.2</molecule>
    <subcellularLocation>
        <location evidence="1">Endoplasmic reticulum membrane</location>
        <topology evidence="2">Multi-pass membrane protein</topology>
    </subcellularLocation>
</comment>
<comment type="subcellular location">
    <molecule>EIN2.2-CEND</molecule>
    <subcellularLocation>
        <location evidence="1">Nucleus</location>
    </subcellularLocation>
    <subcellularLocation>
        <location evidence="1">Cytoplasm</location>
    </subcellularLocation>
    <subcellularLocation>
        <location evidence="1">Endoplasmic reticulum membrane</location>
    </subcellularLocation>
    <text evidence="1">Perception of ethylene or methyl jasmonate leads to proteolytic cleavage allowing the C-terminal domain to localize to the nucleus while the N-terminus remains at the endoplasmic reticulum membrane.</text>
</comment>
<comment type="domain">
    <text evidence="1">The N-terminal (1-562) region seems to be regulated by upstream components of the ET signal transduction pathway, and may in turn regulate the C-terminal region (By similarity). The C-terminal (454-1291) region regulates downstream events of ET and jasmonate signaling pathways, and can confer constitutive responses to ET (By similarity). The nuclear localization signal (1276-1283) is required for interaction with ETR1 (By similarity).</text>
</comment>
<comment type="similarity">
    <text evidence="6">Belongs to the NRAMP (TC 2.A.55) family.</text>
</comment>